<proteinExistence type="inferred from homology"/>
<feature type="chain" id="PRO_1000148241" description="Phosphopentomutase">
    <location>
        <begin position="1"/>
        <end position="388"/>
    </location>
</feature>
<feature type="binding site" evidence="1">
    <location>
        <position position="10"/>
    </location>
    <ligand>
        <name>Mn(2+)</name>
        <dbReference type="ChEBI" id="CHEBI:29035"/>
        <label>1</label>
    </ligand>
</feature>
<feature type="binding site" evidence="1">
    <location>
        <position position="282"/>
    </location>
    <ligand>
        <name>Mn(2+)</name>
        <dbReference type="ChEBI" id="CHEBI:29035"/>
        <label>2</label>
    </ligand>
</feature>
<feature type="binding site" evidence="1">
    <location>
        <position position="287"/>
    </location>
    <ligand>
        <name>Mn(2+)</name>
        <dbReference type="ChEBI" id="CHEBI:29035"/>
        <label>2</label>
    </ligand>
</feature>
<feature type="binding site" evidence="1">
    <location>
        <position position="323"/>
    </location>
    <ligand>
        <name>Mn(2+)</name>
        <dbReference type="ChEBI" id="CHEBI:29035"/>
        <label>1</label>
    </ligand>
</feature>
<feature type="binding site" evidence="1">
    <location>
        <position position="324"/>
    </location>
    <ligand>
        <name>Mn(2+)</name>
        <dbReference type="ChEBI" id="CHEBI:29035"/>
        <label>1</label>
    </ligand>
</feature>
<feature type="binding site" evidence="1">
    <location>
        <position position="335"/>
    </location>
    <ligand>
        <name>Mn(2+)</name>
        <dbReference type="ChEBI" id="CHEBI:29035"/>
        <label>2</label>
    </ligand>
</feature>
<sequence length="388" mass="42658">MKRAILIVLDSVGIGEMPDAHEYGDVGSNTIGNIAKARGGLHLPHLQRLGLGNIAPIQGVDPEASPQGCYGKMAERSPGKDTTTGHWEIAGVVLERAFPTFSKGFPEDFLQAFAERIGRQVIGNEVASGTEIIQRLGQEHVRTGKPIAYTSADSVFQIAAHEEVIPLEELYRICGIAREMLEGDLRVGRVIARPFLGEEGNFYRTTNRHDYAIEPPHKILLDMVKEKGLRVMAVGKIKDIYAGHGVTDHLASKGNRDGVEKTLAFIREKKPGLIMTNLVDFDMLYGHRNDVENYAQALEEFDGRLPEILASLEEEDILFITADHGCDPTTESTDHSREYVPLLVYGKKVVPGRNLGIRSSFADLGATIAEYLGTEELVNGRSFLGELI</sequence>
<accession>B8FPN5</accession>
<dbReference type="EC" id="5.4.2.7" evidence="1"/>
<dbReference type="EMBL" id="CP001336">
    <property type="protein sequence ID" value="ACL21467.1"/>
    <property type="molecule type" value="Genomic_DNA"/>
</dbReference>
<dbReference type="RefSeq" id="WP_005811028.1">
    <property type="nucleotide sequence ID" value="NC_011830.1"/>
</dbReference>
<dbReference type="SMR" id="B8FPN5"/>
<dbReference type="KEGG" id="dhd:Dhaf_3449"/>
<dbReference type="HOGENOM" id="CLU_053861_0_0_9"/>
<dbReference type="UniPathway" id="UPA00002">
    <property type="reaction ID" value="UER00467"/>
</dbReference>
<dbReference type="Proteomes" id="UP000007726">
    <property type="component" value="Chromosome"/>
</dbReference>
<dbReference type="GO" id="GO:0005829">
    <property type="term" value="C:cytosol"/>
    <property type="evidence" value="ECO:0007669"/>
    <property type="project" value="TreeGrafter"/>
</dbReference>
<dbReference type="GO" id="GO:0000287">
    <property type="term" value="F:magnesium ion binding"/>
    <property type="evidence" value="ECO:0007669"/>
    <property type="project" value="InterPro"/>
</dbReference>
<dbReference type="GO" id="GO:0030145">
    <property type="term" value="F:manganese ion binding"/>
    <property type="evidence" value="ECO:0007669"/>
    <property type="project" value="UniProtKB-UniRule"/>
</dbReference>
<dbReference type="GO" id="GO:0008973">
    <property type="term" value="F:phosphopentomutase activity"/>
    <property type="evidence" value="ECO:0007669"/>
    <property type="project" value="UniProtKB-UniRule"/>
</dbReference>
<dbReference type="GO" id="GO:0006018">
    <property type="term" value="P:2-deoxyribose 1-phosphate catabolic process"/>
    <property type="evidence" value="ECO:0007669"/>
    <property type="project" value="UniProtKB-UniRule"/>
</dbReference>
<dbReference type="GO" id="GO:0006015">
    <property type="term" value="P:5-phosphoribose 1-diphosphate biosynthetic process"/>
    <property type="evidence" value="ECO:0007669"/>
    <property type="project" value="UniProtKB-UniPathway"/>
</dbReference>
<dbReference type="GO" id="GO:0043094">
    <property type="term" value="P:metabolic compound salvage"/>
    <property type="evidence" value="ECO:0007669"/>
    <property type="project" value="InterPro"/>
</dbReference>
<dbReference type="GO" id="GO:0009117">
    <property type="term" value="P:nucleotide metabolic process"/>
    <property type="evidence" value="ECO:0007669"/>
    <property type="project" value="InterPro"/>
</dbReference>
<dbReference type="CDD" id="cd16009">
    <property type="entry name" value="PPM"/>
    <property type="match status" value="1"/>
</dbReference>
<dbReference type="FunFam" id="3.30.70.1250:FF:000001">
    <property type="entry name" value="Phosphopentomutase"/>
    <property type="match status" value="1"/>
</dbReference>
<dbReference type="Gene3D" id="3.40.720.10">
    <property type="entry name" value="Alkaline Phosphatase, subunit A"/>
    <property type="match status" value="1"/>
</dbReference>
<dbReference type="Gene3D" id="3.30.70.1250">
    <property type="entry name" value="Phosphopentomutase"/>
    <property type="match status" value="1"/>
</dbReference>
<dbReference type="HAMAP" id="MF_00740">
    <property type="entry name" value="Phosphopentomut"/>
    <property type="match status" value="1"/>
</dbReference>
<dbReference type="InterPro" id="IPR017850">
    <property type="entry name" value="Alkaline_phosphatase_core_sf"/>
</dbReference>
<dbReference type="InterPro" id="IPR010045">
    <property type="entry name" value="DeoB"/>
</dbReference>
<dbReference type="InterPro" id="IPR006124">
    <property type="entry name" value="Metalloenzyme"/>
</dbReference>
<dbReference type="InterPro" id="IPR024052">
    <property type="entry name" value="Phosphopentomutase_DeoB_cap_sf"/>
</dbReference>
<dbReference type="NCBIfam" id="TIGR01696">
    <property type="entry name" value="deoB"/>
    <property type="match status" value="1"/>
</dbReference>
<dbReference type="NCBIfam" id="NF003766">
    <property type="entry name" value="PRK05362.1"/>
    <property type="match status" value="1"/>
</dbReference>
<dbReference type="PANTHER" id="PTHR21110">
    <property type="entry name" value="PHOSPHOPENTOMUTASE"/>
    <property type="match status" value="1"/>
</dbReference>
<dbReference type="PANTHER" id="PTHR21110:SF0">
    <property type="entry name" value="PHOSPHOPENTOMUTASE"/>
    <property type="match status" value="1"/>
</dbReference>
<dbReference type="Pfam" id="PF01676">
    <property type="entry name" value="Metalloenzyme"/>
    <property type="match status" value="1"/>
</dbReference>
<dbReference type="PIRSF" id="PIRSF001491">
    <property type="entry name" value="Ppentomutase"/>
    <property type="match status" value="1"/>
</dbReference>
<dbReference type="SUPFAM" id="SSF53649">
    <property type="entry name" value="Alkaline phosphatase-like"/>
    <property type="match status" value="1"/>
</dbReference>
<dbReference type="SUPFAM" id="SSF143856">
    <property type="entry name" value="DeoB insert domain-like"/>
    <property type="match status" value="1"/>
</dbReference>
<organism>
    <name type="scientific">Desulfitobacterium hafniense (strain DSM 10664 / DCB-2)</name>
    <dbReference type="NCBI Taxonomy" id="272564"/>
    <lineage>
        <taxon>Bacteria</taxon>
        <taxon>Bacillati</taxon>
        <taxon>Bacillota</taxon>
        <taxon>Clostridia</taxon>
        <taxon>Eubacteriales</taxon>
        <taxon>Desulfitobacteriaceae</taxon>
        <taxon>Desulfitobacterium</taxon>
    </lineage>
</organism>
<gene>
    <name evidence="1" type="primary">deoB</name>
    <name type="ordered locus">Dhaf_3449</name>
</gene>
<evidence type="ECO:0000255" key="1">
    <source>
        <dbReference type="HAMAP-Rule" id="MF_00740"/>
    </source>
</evidence>
<comment type="function">
    <text evidence="1">Isomerase that catalyzes the conversion of deoxy-ribose 1-phosphate (dRib-1-P) and ribose 1-phosphate (Rib-1-P) to deoxy-ribose 5-phosphate (dRib-5-P) and ribose 5-phosphate (Rib-5-P), respectively.</text>
</comment>
<comment type="catalytic activity">
    <reaction evidence="1">
        <text>2-deoxy-alpha-D-ribose 1-phosphate = 2-deoxy-D-ribose 5-phosphate</text>
        <dbReference type="Rhea" id="RHEA:27658"/>
        <dbReference type="ChEBI" id="CHEBI:57259"/>
        <dbReference type="ChEBI" id="CHEBI:62877"/>
        <dbReference type="EC" id="5.4.2.7"/>
    </reaction>
</comment>
<comment type="catalytic activity">
    <reaction evidence="1">
        <text>alpha-D-ribose 1-phosphate = D-ribose 5-phosphate</text>
        <dbReference type="Rhea" id="RHEA:18793"/>
        <dbReference type="ChEBI" id="CHEBI:57720"/>
        <dbReference type="ChEBI" id="CHEBI:78346"/>
        <dbReference type="EC" id="5.4.2.7"/>
    </reaction>
</comment>
<comment type="cofactor">
    <cofactor evidence="1">
        <name>Mn(2+)</name>
        <dbReference type="ChEBI" id="CHEBI:29035"/>
    </cofactor>
    <text evidence="1">Binds 2 manganese ions.</text>
</comment>
<comment type="pathway">
    <text evidence="1">Carbohydrate degradation; 2-deoxy-D-ribose 1-phosphate degradation; D-glyceraldehyde 3-phosphate and acetaldehyde from 2-deoxy-alpha-D-ribose 1-phosphate: step 1/2.</text>
</comment>
<comment type="subcellular location">
    <subcellularLocation>
        <location evidence="1">Cytoplasm</location>
    </subcellularLocation>
</comment>
<comment type="similarity">
    <text evidence="1">Belongs to the phosphopentomutase family.</text>
</comment>
<keyword id="KW-0963">Cytoplasm</keyword>
<keyword id="KW-0413">Isomerase</keyword>
<keyword id="KW-0464">Manganese</keyword>
<keyword id="KW-0479">Metal-binding</keyword>
<name>DEOB_DESHD</name>
<protein>
    <recommendedName>
        <fullName evidence="1">Phosphopentomutase</fullName>
        <ecNumber evidence="1">5.4.2.7</ecNumber>
    </recommendedName>
    <alternativeName>
        <fullName evidence="1">Phosphodeoxyribomutase</fullName>
    </alternativeName>
</protein>
<reference key="1">
    <citation type="journal article" date="2012" name="BMC Microbiol.">
        <title>Genome sequence of Desulfitobacterium hafniense DCB-2, a Gram-positive anaerobe capable of dehalogenation and metal reduction.</title>
        <authorList>
            <person name="Kim S.H."/>
            <person name="Harzman C."/>
            <person name="Davis J.K."/>
            <person name="Hutcheson R."/>
            <person name="Broderick J.B."/>
            <person name="Marsh T.L."/>
            <person name="Tiedje J.M."/>
        </authorList>
    </citation>
    <scope>NUCLEOTIDE SEQUENCE [LARGE SCALE GENOMIC DNA]</scope>
    <source>
        <strain>DSM 10664 / DCB-2</strain>
    </source>
</reference>